<dbReference type="EC" id="2.4.1.18" evidence="1"/>
<dbReference type="EMBL" id="CP000878">
    <property type="protein sequence ID" value="ABX08999.1"/>
    <property type="molecule type" value="Genomic_DNA"/>
</dbReference>
<dbReference type="RefSeq" id="WP_012195620.1">
    <property type="nucleotide sequence ID" value="NC_009976.1"/>
</dbReference>
<dbReference type="SMR" id="A9BAY7"/>
<dbReference type="STRING" id="93059.P9211_10681"/>
<dbReference type="CAZy" id="CBM48">
    <property type="family name" value="Carbohydrate-Binding Module Family 48"/>
</dbReference>
<dbReference type="CAZy" id="GH13">
    <property type="family name" value="Glycoside Hydrolase Family 13"/>
</dbReference>
<dbReference type="KEGG" id="pmj:P9211_10681"/>
<dbReference type="eggNOG" id="COG0296">
    <property type="taxonomic scope" value="Bacteria"/>
</dbReference>
<dbReference type="HOGENOM" id="CLU_004245_3_2_3"/>
<dbReference type="OrthoDB" id="9800174at2"/>
<dbReference type="UniPathway" id="UPA00164"/>
<dbReference type="Proteomes" id="UP000000788">
    <property type="component" value="Chromosome"/>
</dbReference>
<dbReference type="GO" id="GO:0005829">
    <property type="term" value="C:cytosol"/>
    <property type="evidence" value="ECO:0007669"/>
    <property type="project" value="TreeGrafter"/>
</dbReference>
<dbReference type="GO" id="GO:0003844">
    <property type="term" value="F:1,4-alpha-glucan branching enzyme activity"/>
    <property type="evidence" value="ECO:0007669"/>
    <property type="project" value="UniProtKB-UniRule"/>
</dbReference>
<dbReference type="GO" id="GO:0043169">
    <property type="term" value="F:cation binding"/>
    <property type="evidence" value="ECO:0007669"/>
    <property type="project" value="InterPro"/>
</dbReference>
<dbReference type="GO" id="GO:0004553">
    <property type="term" value="F:hydrolase activity, hydrolyzing O-glycosyl compounds"/>
    <property type="evidence" value="ECO:0007669"/>
    <property type="project" value="InterPro"/>
</dbReference>
<dbReference type="GO" id="GO:0005978">
    <property type="term" value="P:glycogen biosynthetic process"/>
    <property type="evidence" value="ECO:0007669"/>
    <property type="project" value="UniProtKB-UniRule"/>
</dbReference>
<dbReference type="CDD" id="cd11322">
    <property type="entry name" value="AmyAc_Glg_BE"/>
    <property type="match status" value="1"/>
</dbReference>
<dbReference type="CDD" id="cd02855">
    <property type="entry name" value="E_set_GBE_prok_N"/>
    <property type="match status" value="1"/>
</dbReference>
<dbReference type="FunFam" id="2.60.40.10:FF:000169">
    <property type="entry name" value="1,4-alpha-glucan branching enzyme GlgB"/>
    <property type="match status" value="1"/>
</dbReference>
<dbReference type="FunFam" id="2.60.40.1180:FF:000002">
    <property type="entry name" value="1,4-alpha-glucan branching enzyme GlgB"/>
    <property type="match status" value="1"/>
</dbReference>
<dbReference type="FunFam" id="3.20.20.80:FF:000003">
    <property type="entry name" value="1,4-alpha-glucan branching enzyme GlgB"/>
    <property type="match status" value="1"/>
</dbReference>
<dbReference type="Gene3D" id="3.20.20.80">
    <property type="entry name" value="Glycosidases"/>
    <property type="match status" value="1"/>
</dbReference>
<dbReference type="Gene3D" id="2.60.40.1180">
    <property type="entry name" value="Golgi alpha-mannosidase II"/>
    <property type="match status" value="1"/>
</dbReference>
<dbReference type="Gene3D" id="2.60.40.10">
    <property type="entry name" value="Immunoglobulins"/>
    <property type="match status" value="2"/>
</dbReference>
<dbReference type="HAMAP" id="MF_00685">
    <property type="entry name" value="GlgB"/>
    <property type="match status" value="1"/>
</dbReference>
<dbReference type="InterPro" id="IPR006048">
    <property type="entry name" value="A-amylase/branching_C"/>
</dbReference>
<dbReference type="InterPro" id="IPR037439">
    <property type="entry name" value="Branching_enzy"/>
</dbReference>
<dbReference type="InterPro" id="IPR006407">
    <property type="entry name" value="GlgB"/>
</dbReference>
<dbReference type="InterPro" id="IPR054169">
    <property type="entry name" value="GlgB_N"/>
</dbReference>
<dbReference type="InterPro" id="IPR044143">
    <property type="entry name" value="GlgB_N_E_set_prok"/>
</dbReference>
<dbReference type="InterPro" id="IPR006047">
    <property type="entry name" value="Glyco_hydro_13_cat_dom"/>
</dbReference>
<dbReference type="InterPro" id="IPR004193">
    <property type="entry name" value="Glyco_hydro_13_N"/>
</dbReference>
<dbReference type="InterPro" id="IPR013780">
    <property type="entry name" value="Glyco_hydro_b"/>
</dbReference>
<dbReference type="InterPro" id="IPR017853">
    <property type="entry name" value="Glycoside_hydrolase_SF"/>
</dbReference>
<dbReference type="InterPro" id="IPR013783">
    <property type="entry name" value="Ig-like_fold"/>
</dbReference>
<dbReference type="InterPro" id="IPR014756">
    <property type="entry name" value="Ig_E-set"/>
</dbReference>
<dbReference type="NCBIfam" id="TIGR01515">
    <property type="entry name" value="branching_enzym"/>
    <property type="match status" value="1"/>
</dbReference>
<dbReference type="NCBIfam" id="NF003811">
    <property type="entry name" value="PRK05402.1"/>
    <property type="match status" value="1"/>
</dbReference>
<dbReference type="NCBIfam" id="NF008967">
    <property type="entry name" value="PRK12313.1"/>
    <property type="match status" value="1"/>
</dbReference>
<dbReference type="PANTHER" id="PTHR43651">
    <property type="entry name" value="1,4-ALPHA-GLUCAN-BRANCHING ENZYME"/>
    <property type="match status" value="1"/>
</dbReference>
<dbReference type="PANTHER" id="PTHR43651:SF3">
    <property type="entry name" value="1,4-ALPHA-GLUCAN-BRANCHING ENZYME"/>
    <property type="match status" value="1"/>
</dbReference>
<dbReference type="Pfam" id="PF00128">
    <property type="entry name" value="Alpha-amylase"/>
    <property type="match status" value="2"/>
</dbReference>
<dbReference type="Pfam" id="PF02806">
    <property type="entry name" value="Alpha-amylase_C"/>
    <property type="match status" value="1"/>
</dbReference>
<dbReference type="Pfam" id="PF02922">
    <property type="entry name" value="CBM_48"/>
    <property type="match status" value="1"/>
</dbReference>
<dbReference type="Pfam" id="PF22019">
    <property type="entry name" value="GlgB_N"/>
    <property type="match status" value="1"/>
</dbReference>
<dbReference type="PIRSF" id="PIRSF000463">
    <property type="entry name" value="GlgB"/>
    <property type="match status" value="1"/>
</dbReference>
<dbReference type="SMART" id="SM00642">
    <property type="entry name" value="Aamy"/>
    <property type="match status" value="1"/>
</dbReference>
<dbReference type="SUPFAM" id="SSF51445">
    <property type="entry name" value="(Trans)glycosidases"/>
    <property type="match status" value="1"/>
</dbReference>
<dbReference type="SUPFAM" id="SSF81296">
    <property type="entry name" value="E set domains"/>
    <property type="match status" value="2"/>
</dbReference>
<dbReference type="SUPFAM" id="SSF51011">
    <property type="entry name" value="Glycosyl hydrolase domain"/>
    <property type="match status" value="1"/>
</dbReference>
<sequence>MTTSFVSDWMAQEGQKLSDCKHDDPFSVLGIQPFQGKWIARIWMPEAEEVELLINGSLIPLTPPNHPWIFEALLDENPGSNYQVKVHRGGIKHQQYDPWSFRDEWMGEIDTHLFAEGNHHHIWRRMGAHLSEMNGVCGVMFCLWAPNARSVSVIGEVNSWDGRHHPMQKRMGGIWELFIPGLKEGALYKYEIRTQNGHCYEKSDPYGFEHEVRPAQSSKVSRIDNFKWSDQEWITKRDSSNPLDQPISVYEMHLGSWLHAPSDEPFIEPNGNKRTAVPAADLKPGTRLLTYPELKQKLIKYVKERGFTHIELMPISEHPFDGSWGYQATGWYAPTSRYGTPNEFRAFVDACHSEGIGVILDWVPGHFPKDSHGLAFFDGSHLYEHSDPRIGEHKEWGTLIFNYSRNEVRNFLVANLVFWFEQFHIDGIRVDAVASMLYKDYLRPEGQWIPNEDGGNENTEAVKFLQQANHVLFEHFPGALSIAEESTTWPGVTNPTDVGGLGFNLKWNMGWMHDMLDYFEVDPWFRQFHQNNVTFSITYNYTENFMLALSHDEVVHGKSHLLHKMPGDDWRKYANTRALLAYMWTHPGKKTIFMGMEFGQRKEWNVWDDLEWDLLGYQPHQGIQRLVDDLNVLYKSNPALWRDDFNQYGFQWIDCKDNKNSVISFMRRETLNNEWLIVVANFTPESHPNYRVGVPLEGFYEEIFNTDSDKYGGSNTGNMGGKASEKWSIHEYEDSIDLSLPPLSVLVFKYAQKKSPNEN</sequence>
<keyword id="KW-0119">Carbohydrate metabolism</keyword>
<keyword id="KW-0320">Glycogen biosynthesis</keyword>
<keyword id="KW-0321">Glycogen metabolism</keyword>
<keyword id="KW-0328">Glycosyltransferase</keyword>
<keyword id="KW-1185">Reference proteome</keyword>
<keyword id="KW-0808">Transferase</keyword>
<comment type="function">
    <text evidence="1">Catalyzes the formation of the alpha-1,6-glucosidic linkages in glycogen by scission of a 1,4-alpha-linked oligosaccharide from growing alpha-1,4-glucan chains and the subsequent attachment of the oligosaccharide to the alpha-1,6 position.</text>
</comment>
<comment type="catalytic activity">
    <reaction evidence="1">
        <text>Transfers a segment of a (1-&gt;4)-alpha-D-glucan chain to a primary hydroxy group in a similar glucan chain.</text>
        <dbReference type="EC" id="2.4.1.18"/>
    </reaction>
</comment>
<comment type="pathway">
    <text evidence="1">Glycan biosynthesis; glycogen biosynthesis.</text>
</comment>
<comment type="subunit">
    <text evidence="1">Monomer.</text>
</comment>
<comment type="similarity">
    <text evidence="1">Belongs to the glycosyl hydrolase 13 family. GlgB subfamily.</text>
</comment>
<organism>
    <name type="scientific">Prochlorococcus marinus (strain MIT 9211)</name>
    <dbReference type="NCBI Taxonomy" id="93059"/>
    <lineage>
        <taxon>Bacteria</taxon>
        <taxon>Bacillati</taxon>
        <taxon>Cyanobacteriota</taxon>
        <taxon>Cyanophyceae</taxon>
        <taxon>Synechococcales</taxon>
        <taxon>Prochlorococcaceae</taxon>
        <taxon>Prochlorococcus</taxon>
    </lineage>
</organism>
<evidence type="ECO:0000255" key="1">
    <source>
        <dbReference type="HAMAP-Rule" id="MF_00685"/>
    </source>
</evidence>
<accession>A9BAY7</accession>
<proteinExistence type="inferred from homology"/>
<feature type="chain" id="PRO_1000147760" description="1,4-alpha-glucan branching enzyme GlgB">
    <location>
        <begin position="1"/>
        <end position="759"/>
    </location>
</feature>
<feature type="active site" description="Nucleophile" evidence="1">
    <location>
        <position position="431"/>
    </location>
</feature>
<feature type="active site" description="Proton donor" evidence="1">
    <location>
        <position position="484"/>
    </location>
</feature>
<name>GLGB_PROM4</name>
<protein>
    <recommendedName>
        <fullName evidence="1">1,4-alpha-glucan branching enzyme GlgB</fullName>
        <ecNumber evidence="1">2.4.1.18</ecNumber>
    </recommendedName>
    <alternativeName>
        <fullName evidence="1">1,4-alpha-D-glucan:1,4-alpha-D-glucan 6-glucosyl-transferase</fullName>
    </alternativeName>
    <alternativeName>
        <fullName evidence="1">Alpha-(1-&gt;4)-glucan branching enzyme</fullName>
    </alternativeName>
    <alternativeName>
        <fullName evidence="1">Glycogen branching enzyme</fullName>
        <shortName evidence="1">BE</shortName>
    </alternativeName>
</protein>
<gene>
    <name evidence="1" type="primary">glgB</name>
    <name type="ordered locus">P9211_10681</name>
</gene>
<reference key="1">
    <citation type="journal article" date="2007" name="PLoS Genet.">
        <title>Patterns and implications of gene gain and loss in the evolution of Prochlorococcus.</title>
        <authorList>
            <person name="Kettler G.C."/>
            <person name="Martiny A.C."/>
            <person name="Huang K."/>
            <person name="Zucker J."/>
            <person name="Coleman M.L."/>
            <person name="Rodrigue S."/>
            <person name="Chen F."/>
            <person name="Lapidus A."/>
            <person name="Ferriera S."/>
            <person name="Johnson J."/>
            <person name="Steglich C."/>
            <person name="Church G.M."/>
            <person name="Richardson P."/>
            <person name="Chisholm S.W."/>
        </authorList>
    </citation>
    <scope>NUCLEOTIDE SEQUENCE [LARGE SCALE GENOMIC DNA]</scope>
    <source>
        <strain>MIT 9211</strain>
    </source>
</reference>